<feature type="chain" id="PRO_1000011418" description="Ribonuclease T">
    <location>
        <begin position="1"/>
        <end position="222"/>
    </location>
</feature>
<feature type="domain" description="Exonuclease" evidence="1">
    <location>
        <begin position="20"/>
        <end position="194"/>
    </location>
</feature>
<feature type="active site" description="Proton donor/acceptor" evidence="1">
    <location>
        <position position="181"/>
    </location>
</feature>
<feature type="binding site" evidence="1">
    <location>
        <position position="23"/>
    </location>
    <ligand>
        <name>Mg(2+)</name>
        <dbReference type="ChEBI" id="CHEBI:18420"/>
        <label>1</label>
        <note>catalytic</note>
    </ligand>
</feature>
<feature type="binding site" evidence="1">
    <location>
        <position position="23"/>
    </location>
    <ligand>
        <name>Mg(2+)</name>
        <dbReference type="ChEBI" id="CHEBI:18420"/>
        <label>2</label>
        <note>catalytic</note>
    </ligand>
</feature>
<feature type="binding site" evidence="1">
    <location>
        <position position="25"/>
    </location>
    <ligand>
        <name>Mg(2+)</name>
        <dbReference type="ChEBI" id="CHEBI:18420"/>
        <label>2</label>
        <note>catalytic</note>
    </ligand>
</feature>
<feature type="binding site" evidence="1">
    <location>
        <position position="181"/>
    </location>
    <ligand>
        <name>Mg(2+)</name>
        <dbReference type="ChEBI" id="CHEBI:18420"/>
        <label>2</label>
        <note>catalytic</note>
    </ligand>
</feature>
<feature type="binding site" evidence="1">
    <location>
        <position position="186"/>
    </location>
    <ligand>
        <name>Mg(2+)</name>
        <dbReference type="ChEBI" id="CHEBI:18420"/>
        <label>2</label>
        <note>catalytic</note>
    </ligand>
</feature>
<feature type="site" description="Important for substrate binding and specificity" evidence="1">
    <location>
        <position position="29"/>
    </location>
</feature>
<feature type="site" description="Important for substrate binding and specificity" evidence="1">
    <location>
        <position position="77"/>
    </location>
</feature>
<feature type="site" description="Important for substrate binding and specificity" evidence="1">
    <location>
        <position position="124"/>
    </location>
</feature>
<feature type="site" description="Important for substrate binding and specificity" evidence="1">
    <location>
        <position position="146"/>
    </location>
</feature>
<protein>
    <recommendedName>
        <fullName evidence="1">Ribonuclease T</fullName>
        <ecNumber evidence="1">3.1.13.-</ecNumber>
    </recommendedName>
    <alternativeName>
        <fullName evidence="1">Exoribonuclease T</fullName>
        <shortName evidence="1">RNase T</shortName>
    </alternativeName>
</protein>
<proteinExistence type="inferred from homology"/>
<reference key="1">
    <citation type="submission" date="2006-08" db="EMBL/GenBank/DDBJ databases">
        <title>Complete sequence of Shewanella sp. MR-4.</title>
        <authorList>
            <consortium name="US DOE Joint Genome Institute"/>
            <person name="Copeland A."/>
            <person name="Lucas S."/>
            <person name="Lapidus A."/>
            <person name="Barry K."/>
            <person name="Detter J.C."/>
            <person name="Glavina del Rio T."/>
            <person name="Hammon N."/>
            <person name="Israni S."/>
            <person name="Dalin E."/>
            <person name="Tice H."/>
            <person name="Pitluck S."/>
            <person name="Kiss H."/>
            <person name="Brettin T."/>
            <person name="Bruce D."/>
            <person name="Han C."/>
            <person name="Tapia R."/>
            <person name="Gilna P."/>
            <person name="Schmutz J."/>
            <person name="Larimer F."/>
            <person name="Land M."/>
            <person name="Hauser L."/>
            <person name="Kyrpides N."/>
            <person name="Mikhailova N."/>
            <person name="Nealson K."/>
            <person name="Konstantinidis K."/>
            <person name="Klappenbach J."/>
            <person name="Tiedje J."/>
            <person name="Richardson P."/>
        </authorList>
    </citation>
    <scope>NUCLEOTIDE SEQUENCE [LARGE SCALE GENOMIC DNA]</scope>
    <source>
        <strain>MR-4</strain>
    </source>
</reference>
<keyword id="KW-0269">Exonuclease</keyword>
<keyword id="KW-0378">Hydrolase</keyword>
<keyword id="KW-0460">Magnesium</keyword>
<keyword id="KW-0479">Metal-binding</keyword>
<keyword id="KW-0540">Nuclease</keyword>
<keyword id="KW-0819">tRNA processing</keyword>
<gene>
    <name evidence="1" type="primary">rnt</name>
    <name type="ordered locus">Shewmr4_2375</name>
</gene>
<name>RNT_SHESM</name>
<comment type="function">
    <text evidence="1">Trims short 3' overhangs of a variety of RNA species, leaving a one or two nucleotide 3' overhang. Responsible for the end-turnover of tRNA: specifically removes the terminal AMP residue from uncharged tRNA (tRNA-C-C-A). Also appears to be involved in tRNA biosynthesis.</text>
</comment>
<comment type="cofactor">
    <cofactor evidence="1">
        <name>Mg(2+)</name>
        <dbReference type="ChEBI" id="CHEBI:18420"/>
    </cofactor>
    <text evidence="1">Binds two Mg(2+) per subunit. The active form of the enzyme binds two Mg(2+) ions in its active site. The first Mg(2+) forms only one salt bridge with the protein.</text>
</comment>
<comment type="subunit">
    <text evidence="1">Homodimer.</text>
</comment>
<comment type="similarity">
    <text evidence="1">Belongs to the RNase T family.</text>
</comment>
<sequence>MSDISDANKLKHRFRGYFPVVIDVETAGFNSQTDALLEIAVTLLKMDDEGLLGIDKTLHFNIEPFEGANLEPEALAFNGIDPTNPLRGAVSEKEAFLEIFKAVKKAQKASDCHRSIIVAHNAAFDHGFVSKAIERCDLKRSPFHPFATFDTATLAGLAIGHTVLAKACIMAGIPFDNKEAHSALYDTERTAELFCYIVNRWKHLGGWPLLAAGESEDTDGEE</sequence>
<evidence type="ECO:0000255" key="1">
    <source>
        <dbReference type="HAMAP-Rule" id="MF_00157"/>
    </source>
</evidence>
<dbReference type="EC" id="3.1.13.-" evidence="1"/>
<dbReference type="EMBL" id="CP000446">
    <property type="protein sequence ID" value="ABI39446.1"/>
    <property type="molecule type" value="Genomic_DNA"/>
</dbReference>
<dbReference type="RefSeq" id="WP_011623135.1">
    <property type="nucleotide sequence ID" value="NC_008321.1"/>
</dbReference>
<dbReference type="SMR" id="Q0HHM1"/>
<dbReference type="KEGG" id="she:Shewmr4_2375"/>
<dbReference type="HOGENOM" id="CLU_082724_0_0_6"/>
<dbReference type="GO" id="GO:0005829">
    <property type="term" value="C:cytosol"/>
    <property type="evidence" value="ECO:0007669"/>
    <property type="project" value="TreeGrafter"/>
</dbReference>
<dbReference type="GO" id="GO:0008408">
    <property type="term" value="F:3'-5' exonuclease activity"/>
    <property type="evidence" value="ECO:0007669"/>
    <property type="project" value="TreeGrafter"/>
</dbReference>
<dbReference type="GO" id="GO:0000287">
    <property type="term" value="F:magnesium ion binding"/>
    <property type="evidence" value="ECO:0007669"/>
    <property type="project" value="UniProtKB-UniRule"/>
</dbReference>
<dbReference type="GO" id="GO:0003676">
    <property type="term" value="F:nucleic acid binding"/>
    <property type="evidence" value="ECO:0007669"/>
    <property type="project" value="InterPro"/>
</dbReference>
<dbReference type="GO" id="GO:0016896">
    <property type="term" value="F:RNA exonuclease activity, producing 5'-phosphomonoesters"/>
    <property type="evidence" value="ECO:0007669"/>
    <property type="project" value="UniProtKB-UniRule"/>
</dbReference>
<dbReference type="GO" id="GO:0045004">
    <property type="term" value="P:DNA replication proofreading"/>
    <property type="evidence" value="ECO:0007669"/>
    <property type="project" value="TreeGrafter"/>
</dbReference>
<dbReference type="GO" id="GO:0008033">
    <property type="term" value="P:tRNA processing"/>
    <property type="evidence" value="ECO:0007669"/>
    <property type="project" value="UniProtKB-KW"/>
</dbReference>
<dbReference type="CDD" id="cd06134">
    <property type="entry name" value="RNaseT"/>
    <property type="match status" value="1"/>
</dbReference>
<dbReference type="FunFam" id="3.30.420.10:FF:000009">
    <property type="entry name" value="Ribonuclease T"/>
    <property type="match status" value="1"/>
</dbReference>
<dbReference type="Gene3D" id="3.30.420.10">
    <property type="entry name" value="Ribonuclease H-like superfamily/Ribonuclease H"/>
    <property type="match status" value="1"/>
</dbReference>
<dbReference type="HAMAP" id="MF_00157">
    <property type="entry name" value="RNase_T"/>
    <property type="match status" value="1"/>
</dbReference>
<dbReference type="InterPro" id="IPR013520">
    <property type="entry name" value="Exonuclease_RNaseT/DNA_pol3"/>
</dbReference>
<dbReference type="InterPro" id="IPR005987">
    <property type="entry name" value="RNase_T"/>
</dbReference>
<dbReference type="InterPro" id="IPR012337">
    <property type="entry name" value="RNaseH-like_sf"/>
</dbReference>
<dbReference type="InterPro" id="IPR036397">
    <property type="entry name" value="RNaseH_sf"/>
</dbReference>
<dbReference type="NCBIfam" id="TIGR01298">
    <property type="entry name" value="RNaseT"/>
    <property type="match status" value="1"/>
</dbReference>
<dbReference type="PANTHER" id="PTHR30231">
    <property type="entry name" value="DNA POLYMERASE III SUBUNIT EPSILON"/>
    <property type="match status" value="1"/>
</dbReference>
<dbReference type="PANTHER" id="PTHR30231:SF2">
    <property type="entry name" value="RIBONUCLEASE T"/>
    <property type="match status" value="1"/>
</dbReference>
<dbReference type="Pfam" id="PF00929">
    <property type="entry name" value="RNase_T"/>
    <property type="match status" value="1"/>
</dbReference>
<dbReference type="SMART" id="SM00479">
    <property type="entry name" value="EXOIII"/>
    <property type="match status" value="1"/>
</dbReference>
<dbReference type="SUPFAM" id="SSF53098">
    <property type="entry name" value="Ribonuclease H-like"/>
    <property type="match status" value="1"/>
</dbReference>
<accession>Q0HHM1</accession>
<organism>
    <name type="scientific">Shewanella sp. (strain MR-4)</name>
    <dbReference type="NCBI Taxonomy" id="60480"/>
    <lineage>
        <taxon>Bacteria</taxon>
        <taxon>Pseudomonadati</taxon>
        <taxon>Pseudomonadota</taxon>
        <taxon>Gammaproteobacteria</taxon>
        <taxon>Alteromonadales</taxon>
        <taxon>Shewanellaceae</taxon>
        <taxon>Shewanella</taxon>
    </lineage>
</organism>